<name>LEU1_BRASO</name>
<organism>
    <name type="scientific">Bradyrhizobium sp. (strain ORS 278)</name>
    <dbReference type="NCBI Taxonomy" id="114615"/>
    <lineage>
        <taxon>Bacteria</taxon>
        <taxon>Pseudomonadati</taxon>
        <taxon>Pseudomonadota</taxon>
        <taxon>Alphaproteobacteria</taxon>
        <taxon>Hyphomicrobiales</taxon>
        <taxon>Nitrobacteraceae</taxon>
        <taxon>Bradyrhizobium</taxon>
    </lineage>
</organism>
<gene>
    <name evidence="1" type="primary">leuA</name>
    <name type="ordered locus">BRADO5528</name>
</gene>
<reference key="1">
    <citation type="journal article" date="2007" name="Science">
        <title>Legumes symbioses: absence of nod genes in photosynthetic bradyrhizobia.</title>
        <authorList>
            <person name="Giraud E."/>
            <person name="Moulin L."/>
            <person name="Vallenet D."/>
            <person name="Barbe V."/>
            <person name="Cytryn E."/>
            <person name="Avarre J.-C."/>
            <person name="Jaubert M."/>
            <person name="Simon D."/>
            <person name="Cartieaux F."/>
            <person name="Prin Y."/>
            <person name="Bena G."/>
            <person name="Hannibal L."/>
            <person name="Fardoux J."/>
            <person name="Kojadinovic M."/>
            <person name="Vuillet L."/>
            <person name="Lajus A."/>
            <person name="Cruveiller S."/>
            <person name="Rouy Z."/>
            <person name="Mangenot S."/>
            <person name="Segurens B."/>
            <person name="Dossat C."/>
            <person name="Franck W.L."/>
            <person name="Chang W.-S."/>
            <person name="Saunders E."/>
            <person name="Bruce D."/>
            <person name="Richardson P."/>
            <person name="Normand P."/>
            <person name="Dreyfus B."/>
            <person name="Pignol D."/>
            <person name="Stacey G."/>
            <person name="Emerich D."/>
            <person name="Vermeglio A."/>
            <person name="Medigue C."/>
            <person name="Sadowsky M."/>
        </authorList>
    </citation>
    <scope>NUCLEOTIDE SEQUENCE [LARGE SCALE GENOMIC DNA]</scope>
    <source>
        <strain>ORS 278</strain>
    </source>
</reference>
<protein>
    <recommendedName>
        <fullName evidence="1">2-isopropylmalate synthase</fullName>
        <ecNumber evidence="1">2.3.3.13</ecNumber>
    </recommendedName>
    <alternativeName>
        <fullName evidence="1">Alpha-IPM synthase</fullName>
    </alternativeName>
    <alternativeName>
        <fullName evidence="1">Alpha-isopropylmalate synthase</fullName>
    </alternativeName>
</protein>
<proteinExistence type="inferred from homology"/>
<comment type="function">
    <text evidence="1">Catalyzes the condensation of the acetyl group of acetyl-CoA with 3-methyl-2-oxobutanoate (2-ketoisovalerate) to form 3-carboxy-3-hydroxy-4-methylpentanoate (2-isopropylmalate).</text>
</comment>
<comment type="catalytic activity">
    <reaction evidence="1">
        <text>3-methyl-2-oxobutanoate + acetyl-CoA + H2O = (2S)-2-isopropylmalate + CoA + H(+)</text>
        <dbReference type="Rhea" id="RHEA:21524"/>
        <dbReference type="ChEBI" id="CHEBI:1178"/>
        <dbReference type="ChEBI" id="CHEBI:11851"/>
        <dbReference type="ChEBI" id="CHEBI:15377"/>
        <dbReference type="ChEBI" id="CHEBI:15378"/>
        <dbReference type="ChEBI" id="CHEBI:57287"/>
        <dbReference type="ChEBI" id="CHEBI:57288"/>
        <dbReference type="EC" id="2.3.3.13"/>
    </reaction>
</comment>
<comment type="cofactor">
    <cofactor evidence="1">
        <name>Mn(2+)</name>
        <dbReference type="ChEBI" id="CHEBI:29035"/>
    </cofactor>
</comment>
<comment type="pathway">
    <text evidence="1">Amino-acid biosynthesis; L-leucine biosynthesis; L-leucine from 3-methyl-2-oxobutanoate: step 1/4.</text>
</comment>
<comment type="subunit">
    <text evidence="1">Homodimer.</text>
</comment>
<comment type="subcellular location">
    <subcellularLocation>
        <location evidence="1">Cytoplasm</location>
    </subcellularLocation>
</comment>
<comment type="similarity">
    <text evidence="1">Belongs to the alpha-IPM synthase/homocitrate synthase family. LeuA type 1 subfamily.</text>
</comment>
<keyword id="KW-0028">Amino-acid biosynthesis</keyword>
<keyword id="KW-0100">Branched-chain amino acid biosynthesis</keyword>
<keyword id="KW-0963">Cytoplasm</keyword>
<keyword id="KW-0432">Leucine biosynthesis</keyword>
<keyword id="KW-0464">Manganese</keyword>
<keyword id="KW-0479">Metal-binding</keyword>
<keyword id="KW-1185">Reference proteome</keyword>
<keyword id="KW-0808">Transferase</keyword>
<dbReference type="EC" id="2.3.3.13" evidence="1"/>
<dbReference type="EMBL" id="CU234118">
    <property type="protein sequence ID" value="CAL79202.1"/>
    <property type="molecule type" value="Genomic_DNA"/>
</dbReference>
<dbReference type="RefSeq" id="WP_012029114.1">
    <property type="nucleotide sequence ID" value="NC_009445.1"/>
</dbReference>
<dbReference type="SMR" id="A4YZ76"/>
<dbReference type="STRING" id="114615.BRADO5528"/>
<dbReference type="KEGG" id="bra:BRADO5528"/>
<dbReference type="eggNOG" id="COG0119">
    <property type="taxonomic scope" value="Bacteria"/>
</dbReference>
<dbReference type="HOGENOM" id="CLU_022158_0_1_5"/>
<dbReference type="OrthoDB" id="9803573at2"/>
<dbReference type="UniPathway" id="UPA00048">
    <property type="reaction ID" value="UER00070"/>
</dbReference>
<dbReference type="Proteomes" id="UP000001994">
    <property type="component" value="Chromosome"/>
</dbReference>
<dbReference type="GO" id="GO:0005829">
    <property type="term" value="C:cytosol"/>
    <property type="evidence" value="ECO:0007669"/>
    <property type="project" value="TreeGrafter"/>
</dbReference>
<dbReference type="GO" id="GO:0003852">
    <property type="term" value="F:2-isopropylmalate synthase activity"/>
    <property type="evidence" value="ECO:0007669"/>
    <property type="project" value="UniProtKB-UniRule"/>
</dbReference>
<dbReference type="GO" id="GO:0003985">
    <property type="term" value="F:acetyl-CoA C-acetyltransferase activity"/>
    <property type="evidence" value="ECO:0007669"/>
    <property type="project" value="UniProtKB-UniRule"/>
</dbReference>
<dbReference type="GO" id="GO:0030145">
    <property type="term" value="F:manganese ion binding"/>
    <property type="evidence" value="ECO:0007669"/>
    <property type="project" value="UniProtKB-UniRule"/>
</dbReference>
<dbReference type="GO" id="GO:0009098">
    <property type="term" value="P:L-leucine biosynthetic process"/>
    <property type="evidence" value="ECO:0007669"/>
    <property type="project" value="UniProtKB-UniRule"/>
</dbReference>
<dbReference type="CDD" id="cd07940">
    <property type="entry name" value="DRE_TIM_IPMS"/>
    <property type="match status" value="1"/>
</dbReference>
<dbReference type="FunFam" id="1.10.238.260:FF:000001">
    <property type="entry name" value="2-isopropylmalate synthase"/>
    <property type="match status" value="1"/>
</dbReference>
<dbReference type="FunFam" id="3.20.20.70:FF:000010">
    <property type="entry name" value="2-isopropylmalate synthase"/>
    <property type="match status" value="1"/>
</dbReference>
<dbReference type="FunFam" id="3.30.160.270:FF:000003">
    <property type="entry name" value="2-isopropylmalate synthase"/>
    <property type="match status" value="1"/>
</dbReference>
<dbReference type="Gene3D" id="1.10.238.260">
    <property type="match status" value="1"/>
</dbReference>
<dbReference type="Gene3D" id="3.30.160.270">
    <property type="match status" value="1"/>
</dbReference>
<dbReference type="Gene3D" id="3.20.20.70">
    <property type="entry name" value="Aldolase class I"/>
    <property type="match status" value="1"/>
</dbReference>
<dbReference type="HAMAP" id="MF_01025">
    <property type="entry name" value="LeuA_type1"/>
    <property type="match status" value="1"/>
</dbReference>
<dbReference type="InterPro" id="IPR050073">
    <property type="entry name" value="2-IPM_HCS-like"/>
</dbReference>
<dbReference type="InterPro" id="IPR013709">
    <property type="entry name" value="2-isopropylmalate_synth_dimer"/>
</dbReference>
<dbReference type="InterPro" id="IPR002034">
    <property type="entry name" value="AIPM/Hcit_synth_CS"/>
</dbReference>
<dbReference type="InterPro" id="IPR013785">
    <property type="entry name" value="Aldolase_TIM"/>
</dbReference>
<dbReference type="InterPro" id="IPR054691">
    <property type="entry name" value="LeuA/HCS_post-cat"/>
</dbReference>
<dbReference type="InterPro" id="IPR036230">
    <property type="entry name" value="LeuA_allosteric_dom_sf"/>
</dbReference>
<dbReference type="InterPro" id="IPR005671">
    <property type="entry name" value="LeuA_bact_synth"/>
</dbReference>
<dbReference type="InterPro" id="IPR000891">
    <property type="entry name" value="PYR_CT"/>
</dbReference>
<dbReference type="NCBIfam" id="TIGR00973">
    <property type="entry name" value="leuA_bact"/>
    <property type="match status" value="1"/>
</dbReference>
<dbReference type="NCBIfam" id="NF002086">
    <property type="entry name" value="PRK00915.1-3"/>
    <property type="match status" value="1"/>
</dbReference>
<dbReference type="NCBIfam" id="NF002087">
    <property type="entry name" value="PRK00915.1-4"/>
    <property type="match status" value="1"/>
</dbReference>
<dbReference type="PANTHER" id="PTHR10277:SF9">
    <property type="entry name" value="2-ISOPROPYLMALATE SYNTHASE 1, CHLOROPLASTIC-RELATED"/>
    <property type="match status" value="1"/>
</dbReference>
<dbReference type="PANTHER" id="PTHR10277">
    <property type="entry name" value="HOMOCITRATE SYNTHASE-RELATED"/>
    <property type="match status" value="1"/>
</dbReference>
<dbReference type="Pfam" id="PF22617">
    <property type="entry name" value="HCS_D2"/>
    <property type="match status" value="1"/>
</dbReference>
<dbReference type="Pfam" id="PF00682">
    <property type="entry name" value="HMGL-like"/>
    <property type="match status" value="1"/>
</dbReference>
<dbReference type="Pfam" id="PF08502">
    <property type="entry name" value="LeuA_dimer"/>
    <property type="match status" value="1"/>
</dbReference>
<dbReference type="SMART" id="SM00917">
    <property type="entry name" value="LeuA_dimer"/>
    <property type="match status" value="1"/>
</dbReference>
<dbReference type="SUPFAM" id="SSF110921">
    <property type="entry name" value="2-isopropylmalate synthase LeuA, allosteric (dimerisation) domain"/>
    <property type="match status" value="1"/>
</dbReference>
<dbReference type="SUPFAM" id="SSF51569">
    <property type="entry name" value="Aldolase"/>
    <property type="match status" value="1"/>
</dbReference>
<dbReference type="PROSITE" id="PS00815">
    <property type="entry name" value="AIPM_HOMOCIT_SYNTH_1"/>
    <property type="match status" value="1"/>
</dbReference>
<dbReference type="PROSITE" id="PS00816">
    <property type="entry name" value="AIPM_HOMOCIT_SYNTH_2"/>
    <property type="match status" value="1"/>
</dbReference>
<dbReference type="PROSITE" id="PS50991">
    <property type="entry name" value="PYR_CT"/>
    <property type="match status" value="1"/>
</dbReference>
<sequence>MSNPVQSDKDRVVIFDTTLRDGEQCPGATMTFEEKLNIAAMLDDMGVDIIEAGFPIASDGDFEAVNEIAKRSKNAVICGLSRAGAKDIDRCAEAIRPAKRGRIHTFLSTSPVHMKYKLQMDPQQVFELVISSVTRARNHTDDVEWSSEDGTRTEFDFLCRCVEAAIKAGASTINIPDTVGYAVPEEYYDLFKRVRETVPNSDKAVFSVHCHNDLGMAVANSMAGVRAGARQIECTINGIGERAGNAALEEVVMAMRVRNDKLPFWNKIDTTQLTHASKVVSAATSFPVQYNKAIVGRNAFAHESGIHQDGMLKNAQTYEIMLPETVGVKQTSLVMGKHSGRHAFIHKLEEMGHKLSSNQVEDAFVRFKALADRKKQIYDEDIEALIDEGMVSAHDRIKLLSLSVIAGTRGPQRATMKLDIDGVTRIEESEGNGPVDAVFNCIKSLVPHEAKLELYQVHAVTEGTDAQAEVSVRLSQDGRSMTARAADPDTLVASAKAYLGALNKLVMKRQRDVAPGHGASAAAAS</sequence>
<accession>A4YZ76</accession>
<evidence type="ECO:0000255" key="1">
    <source>
        <dbReference type="HAMAP-Rule" id="MF_01025"/>
    </source>
</evidence>
<feature type="chain" id="PRO_1000149142" description="2-isopropylmalate synthase">
    <location>
        <begin position="1"/>
        <end position="525"/>
    </location>
</feature>
<feature type="domain" description="Pyruvate carboxyltransferase" evidence="1">
    <location>
        <begin position="12"/>
        <end position="274"/>
    </location>
</feature>
<feature type="region of interest" description="Regulatory domain" evidence="1">
    <location>
        <begin position="398"/>
        <end position="525"/>
    </location>
</feature>
<feature type="binding site" evidence="1">
    <location>
        <position position="21"/>
    </location>
    <ligand>
        <name>Mn(2+)</name>
        <dbReference type="ChEBI" id="CHEBI:29035"/>
    </ligand>
</feature>
<feature type="binding site" evidence="1">
    <location>
        <position position="209"/>
    </location>
    <ligand>
        <name>Mn(2+)</name>
        <dbReference type="ChEBI" id="CHEBI:29035"/>
    </ligand>
</feature>
<feature type="binding site" evidence="1">
    <location>
        <position position="211"/>
    </location>
    <ligand>
        <name>Mn(2+)</name>
        <dbReference type="ChEBI" id="CHEBI:29035"/>
    </ligand>
</feature>
<feature type="binding site" evidence="1">
    <location>
        <position position="245"/>
    </location>
    <ligand>
        <name>Mn(2+)</name>
        <dbReference type="ChEBI" id="CHEBI:29035"/>
    </ligand>
</feature>